<keyword id="KW-0963">Cytoplasm</keyword>
<keyword id="KW-0489">Methyltransferase</keyword>
<keyword id="KW-0539">Nucleus</keyword>
<keyword id="KW-1185">Reference proteome</keyword>
<keyword id="KW-0949">S-adenosyl-L-methionine</keyword>
<keyword id="KW-0808">Transferase</keyword>
<dbReference type="EC" id="2.1.1.85" evidence="4"/>
<dbReference type="EMBL" id="Z38125">
    <property type="protein sequence ID" value="CAA86270.1"/>
    <property type="molecule type" value="Genomic_DNA"/>
</dbReference>
<dbReference type="EMBL" id="AY558076">
    <property type="protein sequence ID" value="AAS56402.1"/>
    <property type="molecule type" value="Genomic_DNA"/>
</dbReference>
<dbReference type="EMBL" id="BK006942">
    <property type="protein sequence ID" value="DAA08443.1"/>
    <property type="molecule type" value="Genomic_DNA"/>
</dbReference>
<dbReference type="PIR" id="S48462">
    <property type="entry name" value="S48462"/>
</dbReference>
<dbReference type="RefSeq" id="NP_012156.1">
    <property type="nucleotide sequence ID" value="NM_001179458.1"/>
</dbReference>
<dbReference type="SMR" id="P40481"/>
<dbReference type="BioGRID" id="34881">
    <property type="interactions" value="159"/>
</dbReference>
<dbReference type="DIP" id="DIP-4710N"/>
<dbReference type="FunCoup" id="P40481">
    <property type="interactions" value="1919"/>
</dbReference>
<dbReference type="IntAct" id="P40481">
    <property type="interactions" value="2"/>
</dbReference>
<dbReference type="STRING" id="4932.YIL110W"/>
<dbReference type="iPTMnet" id="P40481"/>
<dbReference type="PaxDb" id="4932-YIL110W"/>
<dbReference type="PeptideAtlas" id="P40481"/>
<dbReference type="EnsemblFungi" id="YIL110W_mRNA">
    <property type="protein sequence ID" value="YIL110W"/>
    <property type="gene ID" value="YIL110W"/>
</dbReference>
<dbReference type="GeneID" id="854696"/>
<dbReference type="KEGG" id="sce:YIL110W"/>
<dbReference type="AGR" id="SGD:S000001372"/>
<dbReference type="SGD" id="S000001372">
    <property type="gene designation" value="HPM1"/>
</dbReference>
<dbReference type="VEuPathDB" id="FungiDB:YIL110W"/>
<dbReference type="eggNOG" id="KOG2920">
    <property type="taxonomic scope" value="Eukaryota"/>
</dbReference>
<dbReference type="GeneTree" id="ENSGT00390000000464"/>
<dbReference type="HOGENOM" id="CLU_038704_1_1_1"/>
<dbReference type="InParanoid" id="P40481"/>
<dbReference type="OMA" id="NLLLTWH"/>
<dbReference type="OrthoDB" id="1723750at2759"/>
<dbReference type="BioCyc" id="YEAST:G3O-31365-MONOMER"/>
<dbReference type="BioGRID-ORCS" id="854696">
    <property type="hits" value="4 hits in 10 CRISPR screens"/>
</dbReference>
<dbReference type="PRO" id="PR:P40481"/>
<dbReference type="Proteomes" id="UP000002311">
    <property type="component" value="Chromosome IX"/>
</dbReference>
<dbReference type="RNAct" id="P40481">
    <property type="molecule type" value="protein"/>
</dbReference>
<dbReference type="GO" id="GO:0005737">
    <property type="term" value="C:cytoplasm"/>
    <property type="evidence" value="ECO:0007005"/>
    <property type="project" value="SGD"/>
</dbReference>
<dbReference type="GO" id="GO:0005634">
    <property type="term" value="C:nucleus"/>
    <property type="evidence" value="ECO:0007005"/>
    <property type="project" value="SGD"/>
</dbReference>
<dbReference type="GO" id="GO:0018064">
    <property type="term" value="F:protein-L-histidine N-tele-methyltransferase activity"/>
    <property type="evidence" value="ECO:0000314"/>
    <property type="project" value="UniProtKB"/>
</dbReference>
<dbReference type="GO" id="GO:0042038">
    <property type="term" value="P:peptidyl-histidine methylation, to form tele-methylhistidine"/>
    <property type="evidence" value="ECO:0000314"/>
    <property type="project" value="UniProtKB"/>
</dbReference>
<dbReference type="GO" id="GO:0045903">
    <property type="term" value="P:positive regulation of translational fidelity"/>
    <property type="evidence" value="ECO:0000315"/>
    <property type="project" value="SGD"/>
</dbReference>
<dbReference type="GO" id="GO:0006417">
    <property type="term" value="P:regulation of translation"/>
    <property type="evidence" value="ECO:0000318"/>
    <property type="project" value="GO_Central"/>
</dbReference>
<dbReference type="GO" id="GO:0000027">
    <property type="term" value="P:ribosomal large subunit assembly"/>
    <property type="evidence" value="ECO:0000315"/>
    <property type="project" value="SGD"/>
</dbReference>
<dbReference type="FunFam" id="3.40.50.150:FF:000483">
    <property type="entry name" value="HPM1p AdoMet-dependent methyltransferase"/>
    <property type="match status" value="1"/>
</dbReference>
<dbReference type="Gene3D" id="3.40.50.150">
    <property type="entry name" value="Vaccinia Virus protein VP39"/>
    <property type="match status" value="1"/>
</dbReference>
<dbReference type="InterPro" id="IPR019410">
    <property type="entry name" value="Methyltransf_16"/>
</dbReference>
<dbReference type="InterPro" id="IPR029063">
    <property type="entry name" value="SAM-dependent_MTases_sf"/>
</dbReference>
<dbReference type="PANTHER" id="PTHR14614">
    <property type="entry name" value="HEPATOCELLULAR CARCINOMA-ASSOCIATED ANTIGEN"/>
    <property type="match status" value="1"/>
</dbReference>
<dbReference type="PANTHER" id="PTHR14614:SF39">
    <property type="entry name" value="HISTIDINE PROTEIN METHYLTRANSFERASE 1 HOMOLOG"/>
    <property type="match status" value="1"/>
</dbReference>
<protein>
    <recommendedName>
        <fullName evidence="6">Histidine protein methyltransferase 1</fullName>
        <ecNumber evidence="4">2.1.1.85</ecNumber>
    </recommendedName>
    <alternativeName>
        <fullName>Mitotic exit network interactor 1</fullName>
    </alternativeName>
</protein>
<reference key="1">
    <citation type="journal article" date="1997" name="Nature">
        <title>The nucleotide sequence of Saccharomyces cerevisiae chromosome IX.</title>
        <authorList>
            <person name="Churcher C.M."/>
            <person name="Bowman S."/>
            <person name="Badcock K."/>
            <person name="Bankier A.T."/>
            <person name="Brown D."/>
            <person name="Chillingworth T."/>
            <person name="Connor R."/>
            <person name="Devlin K."/>
            <person name="Gentles S."/>
            <person name="Hamlin N."/>
            <person name="Harris D.E."/>
            <person name="Horsnell T."/>
            <person name="Hunt S."/>
            <person name="Jagels K."/>
            <person name="Jones M."/>
            <person name="Lye G."/>
            <person name="Moule S."/>
            <person name="Odell C."/>
            <person name="Pearson D."/>
            <person name="Rajandream M.A."/>
            <person name="Rice P."/>
            <person name="Rowley N."/>
            <person name="Skelton J."/>
            <person name="Smith V."/>
            <person name="Walsh S.V."/>
            <person name="Whitehead S."/>
            <person name="Barrell B.G."/>
        </authorList>
    </citation>
    <scope>NUCLEOTIDE SEQUENCE [LARGE SCALE GENOMIC DNA]</scope>
    <source>
        <strain>ATCC 204508 / S288c</strain>
    </source>
</reference>
<reference key="2">
    <citation type="journal article" date="2014" name="G3 (Bethesda)">
        <title>The reference genome sequence of Saccharomyces cerevisiae: Then and now.</title>
        <authorList>
            <person name="Engel S.R."/>
            <person name="Dietrich F.S."/>
            <person name="Fisk D.G."/>
            <person name="Binkley G."/>
            <person name="Balakrishnan R."/>
            <person name="Costanzo M.C."/>
            <person name="Dwight S.S."/>
            <person name="Hitz B.C."/>
            <person name="Karra K."/>
            <person name="Nash R.S."/>
            <person name="Weng S."/>
            <person name="Wong E.D."/>
            <person name="Lloyd P."/>
            <person name="Skrzypek M.S."/>
            <person name="Miyasato S.R."/>
            <person name="Simison M."/>
            <person name="Cherry J.M."/>
        </authorList>
    </citation>
    <scope>GENOME REANNOTATION</scope>
    <source>
        <strain>ATCC 204508 / S288c</strain>
    </source>
</reference>
<reference key="3">
    <citation type="journal article" date="2007" name="Genome Res.">
        <title>Approaching a complete repository of sequence-verified protein-encoding clones for Saccharomyces cerevisiae.</title>
        <authorList>
            <person name="Hu Y."/>
            <person name="Rolfs A."/>
            <person name="Bhullar B."/>
            <person name="Murthy T.V.S."/>
            <person name="Zhu C."/>
            <person name="Berger M.F."/>
            <person name="Camargo A.A."/>
            <person name="Kelley F."/>
            <person name="McCarron S."/>
            <person name="Jepson D."/>
            <person name="Richardson A."/>
            <person name="Raphael J."/>
            <person name="Moreira D."/>
            <person name="Taycher E."/>
            <person name="Zuo D."/>
            <person name="Mohr S."/>
            <person name="Kane M.F."/>
            <person name="Williamson J."/>
            <person name="Simpson A.J.G."/>
            <person name="Bulyk M.L."/>
            <person name="Harlow E."/>
            <person name="Marsischky G."/>
            <person name="Kolodner R.D."/>
            <person name="LaBaer J."/>
        </authorList>
    </citation>
    <scope>NUCLEOTIDE SEQUENCE [GENOMIC DNA]</scope>
    <source>
        <strain>ATCC 204508 / S288c</strain>
    </source>
</reference>
<reference key="4">
    <citation type="journal article" date="2003" name="Nature">
        <title>Global analysis of protein localization in budding yeast.</title>
        <authorList>
            <person name="Huh W.-K."/>
            <person name="Falvo J.V."/>
            <person name="Gerke L.C."/>
            <person name="Carroll A.S."/>
            <person name="Howson R.W."/>
            <person name="Weissman J.S."/>
            <person name="O'Shea E.K."/>
        </authorList>
    </citation>
    <scope>SUBCELLULAR LOCATION [LARGE SCALE ANALYSIS]</scope>
</reference>
<reference key="5">
    <citation type="journal article" date="2004" name="Genetics">
        <title>Analysis of beta-1,3-glucan assembly in Saccharomyces cerevisiae using a synthetic interaction network and altered sensitivity to caspofungin.</title>
        <authorList>
            <person name="Lesage G."/>
            <person name="Sdicu A.-M."/>
            <person name="Menard P."/>
            <person name="Shapiro J."/>
            <person name="Hussein S."/>
            <person name="Bussey H."/>
        </authorList>
    </citation>
    <scope>DISRUPTION PHENOTYPE</scope>
</reference>
<reference key="6">
    <citation type="journal article" date="2005" name="J. Natl. Cancer Inst.">
        <title>Mechanism of selectivity of an angiogenesis inhibitor from screening a genome-wide set of Saccharomyces cerevisiae deletion strains.</title>
        <authorList>
            <person name="Dilda P.J."/>
            <person name="Don A.S."/>
            <person name="Tanabe K.M."/>
            <person name="Higgins V.J."/>
            <person name="Allen J.D."/>
            <person name="Dawes I.W."/>
            <person name="Hogg P.J."/>
        </authorList>
    </citation>
    <scope>EFFECT OF GENE DELETION</scope>
</reference>
<reference key="7">
    <citation type="journal article" date="2010" name="J. Biol. Chem.">
        <title>A novel 3-methylhistidine modification of yeast ribosomal protein Rpl3 is dependent upon the YIL110W methyltransferase.</title>
        <authorList>
            <person name="Webb K.J."/>
            <person name="Zurita-Lopez C.I."/>
            <person name="Al-Hadid Q."/>
            <person name="Laganowsky A."/>
            <person name="Young B.D."/>
            <person name="Lipson R.S."/>
            <person name="Souda P."/>
            <person name="Faull K.F."/>
            <person name="Whitelegge J.P."/>
            <person name="Clarke S.G."/>
        </authorList>
    </citation>
    <scope>FUNCTION</scope>
</reference>
<reference key="8">
    <citation type="journal article" date="2014" name="Mol. Cell. Biol.">
        <title>Histidine methylation of yeast ribosomal protein Rpl3p is required for proper 60S subunit assembly.</title>
        <authorList>
            <person name="Al-Hadid Q."/>
            <person name="Roy K."/>
            <person name="Munroe W."/>
            <person name="Dzialo M.C."/>
            <person name="Chanfreau G.F."/>
            <person name="Clarke S.G."/>
        </authorList>
    </citation>
    <scope>FUNCTION</scope>
    <scope>CATALYTIC ACTIVITY</scope>
    <scope>DISRUPTION PHENOTYPE</scope>
</reference>
<reference key="9">
    <citation type="journal article" date="2016" name="RNA">
        <title>Methylation of yeast ribosomal protein Rpl3 promotes translational elongation fidelity.</title>
        <authorList>
            <person name="Al-Hadid Q."/>
            <person name="Roy K."/>
            <person name="Chanfreau G."/>
            <person name="Clarke S.G."/>
        </authorList>
    </citation>
    <scope>FUNCTION</scope>
</reference>
<feature type="chain" id="PRO_0000202964" description="Histidine protein methyltransferase 1">
    <location>
        <begin position="1"/>
        <end position="377"/>
    </location>
</feature>
<organism>
    <name type="scientific">Saccharomyces cerevisiae (strain ATCC 204508 / S288c)</name>
    <name type="common">Baker's yeast</name>
    <dbReference type="NCBI Taxonomy" id="559292"/>
    <lineage>
        <taxon>Eukaryota</taxon>
        <taxon>Fungi</taxon>
        <taxon>Dikarya</taxon>
        <taxon>Ascomycota</taxon>
        <taxon>Saccharomycotina</taxon>
        <taxon>Saccharomycetes</taxon>
        <taxon>Saccharomycetales</taxon>
        <taxon>Saccharomycetaceae</taxon>
        <taxon>Saccharomyces</taxon>
    </lineage>
</organism>
<name>HPM1_YEAST</name>
<proteinExistence type="evidence at protein level"/>
<gene>
    <name evidence="6" type="primary">HPM1</name>
    <name type="synonym">MNI1</name>
    <name type="ordered locus">YIL110W</name>
</gene>
<evidence type="ECO:0000269" key="1">
    <source>
    </source>
</evidence>
<evidence type="ECO:0000269" key="2">
    <source>
    </source>
</evidence>
<evidence type="ECO:0000269" key="3">
    <source>
    </source>
</evidence>
<evidence type="ECO:0000269" key="4">
    <source>
    </source>
</evidence>
<evidence type="ECO:0000269" key="5">
    <source>
    </source>
</evidence>
<evidence type="ECO:0000303" key="6">
    <source>
    </source>
</evidence>
<evidence type="ECO:0000305" key="7"/>
<evidence type="ECO:0000305" key="8">
    <source>
    </source>
</evidence>
<accession>P40481</accession>
<accession>D6VVH7</accession>
<sequence>MSFSFGFTSNDFDDDELVAQPETFVESSKENENTTAYINPLDSDFLSQAGVVQPNVEDLGTILESLKDVRLTFEEFQSPIYRKPLIKRELFDVKHQLMLETDAQSNNNSTELDILLGDTSEDLRKNIYEGGLKSWECSYDLVDLLSENVDRISNDIDAVVEIGCGTALPSEFLFRSALLRNDRSKGLKFVLTDYNASVLRLVTIPNLVITWAKTVLTKEQWYALQKDECEDIPINNEELLLTSKLLAAFYDDVQSRNISVTLISGSWGRKFSNLIHEVLSGSQKVLSLSSETIYQPDNLPVIAETILDIHNLPQTDVKTYVAAKDIYFGVGGSITEFEAYLDDKINSEHLPIHSERFKVNSGLKRSIICIETNKAIR</sequence>
<comment type="function">
    <text evidence="3 4 5">Protein-histidine N-methyltransferase that mediates methylation of RPL3 at 'His-243' (PubMed:20864530, PubMed:24865971). Methylates ribosome-associated RPL3, but not free RPL3, thereby regulating 60S subunit assembly (PubMed:24865971, PubMed:26826131). In addition to RPL3, mediates His methylation of other proteins (PubMed:26826131).</text>
</comment>
<comment type="catalytic activity">
    <reaction evidence="8">
        <text>L-histidyl-[protein] + S-adenosyl-L-methionine = N(tele)-methyl-L-histidyl-[protein] + S-adenosyl-L-homocysteine + H(+)</text>
        <dbReference type="Rhea" id="RHEA:19369"/>
        <dbReference type="Rhea" id="RHEA-COMP:9745"/>
        <dbReference type="Rhea" id="RHEA-COMP:11600"/>
        <dbReference type="ChEBI" id="CHEBI:15378"/>
        <dbReference type="ChEBI" id="CHEBI:16367"/>
        <dbReference type="ChEBI" id="CHEBI:29979"/>
        <dbReference type="ChEBI" id="CHEBI:57856"/>
        <dbReference type="ChEBI" id="CHEBI:59789"/>
        <dbReference type="EC" id="2.1.1.85"/>
    </reaction>
</comment>
<comment type="subcellular location">
    <subcellularLocation>
        <location evidence="1">Cytoplasm</location>
    </subcellularLocation>
    <subcellularLocation>
        <location evidence="1">Nucleus</location>
    </subcellularLocation>
</comment>
<comment type="disruption phenotype">
    <text evidence="2 4">Loss of Protein-histidine methylation (PubMed:24865971). Impaired early rRNA processing, resulting in a deficiency of 60S subunits and translation initiation defects (PubMed:24865971). A haploid deletion mutant leads to hypersensitivity to echinocandin-like antifungal lipopeptide caspofungin, a 1,3-beta-glucan synthase inhibitor. Deletion confers sensitivity to the synthetic tripeptide arsenical 4-(N-(S-glutathionylacetyl)amino) phenylarsenoxide (GSAO) (PubMed:15166135).</text>
</comment>
<comment type="similarity">
    <text evidence="7">Belongs to the methyltransferase superfamily. METTL18 family.</text>
</comment>